<keyword id="KW-0378">Hydrolase</keyword>
<keyword id="KW-0479">Metal-binding</keyword>
<keyword id="KW-0482">Metalloprotease</keyword>
<keyword id="KW-0645">Protease</keyword>
<keyword id="KW-0862">Zinc</keyword>
<gene>
    <name type="ordered locus">spyM18_1079</name>
</gene>
<sequence>MYSIKCDDNKAMPRERLMRLGAESLSNQELLAILLRTGNKEKHVLELSSYLLSHLDSLADFKKMSLQELQHLAGIGKVKAIEIKAMIELVSRILATDKTLTDSVLTSVQVAEKMMAALGDKKQEHLVVLYLDNQNRIIEEKTIFIGTVRRSLAEPREILYYACKNMATSLIVIHNHPSGNIEPSSNDYCFTEKIKRSCEDLGIICLDHIIVSYKDYYSFREKSTLF</sequence>
<protein>
    <recommendedName>
        <fullName>UPF0758 protein spyM18_1079</fullName>
    </recommendedName>
</protein>
<evidence type="ECO:0000255" key="1">
    <source>
        <dbReference type="PROSITE-ProRule" id="PRU01182"/>
    </source>
</evidence>
<evidence type="ECO:0000305" key="2"/>
<reference key="1">
    <citation type="journal article" date="2002" name="Proc. Natl. Acad. Sci. U.S.A.">
        <title>Genome sequence and comparative microarray analysis of serotype M18 group A Streptococcus strains associated with acute rheumatic fever outbreaks.</title>
        <authorList>
            <person name="Smoot J.C."/>
            <person name="Barbian K.D."/>
            <person name="Van Gompel J.J."/>
            <person name="Smoot L.M."/>
            <person name="Chaussee M.S."/>
            <person name="Sylva G.L."/>
            <person name="Sturdevant D.E."/>
            <person name="Ricklefs S.M."/>
            <person name="Porcella S.F."/>
            <person name="Parkins L.D."/>
            <person name="Beres S.B."/>
            <person name="Campbell D.S."/>
            <person name="Smith T.M."/>
            <person name="Zhang Q."/>
            <person name="Kapur V."/>
            <person name="Daly J.A."/>
            <person name="Veasy L.G."/>
            <person name="Musser J.M."/>
        </authorList>
    </citation>
    <scope>NUCLEOTIDE SEQUENCE [LARGE SCALE GENOMIC DNA]</scope>
    <source>
        <strain>MGAS8232</strain>
    </source>
</reference>
<comment type="similarity">
    <text evidence="2">Belongs to the UPF0758 family.</text>
</comment>
<dbReference type="EMBL" id="AE009949">
    <property type="protein sequence ID" value="AAL97702.1"/>
    <property type="molecule type" value="Genomic_DNA"/>
</dbReference>
<dbReference type="SMR" id="P65963"/>
<dbReference type="KEGG" id="spm:spyM18_1079"/>
<dbReference type="HOGENOM" id="CLU_073529_0_2_9"/>
<dbReference type="GO" id="GO:0046872">
    <property type="term" value="F:metal ion binding"/>
    <property type="evidence" value="ECO:0007669"/>
    <property type="project" value="UniProtKB-KW"/>
</dbReference>
<dbReference type="GO" id="GO:0008237">
    <property type="term" value="F:metallopeptidase activity"/>
    <property type="evidence" value="ECO:0007669"/>
    <property type="project" value="UniProtKB-KW"/>
</dbReference>
<dbReference type="GO" id="GO:0006508">
    <property type="term" value="P:proteolysis"/>
    <property type="evidence" value="ECO:0007669"/>
    <property type="project" value="UniProtKB-KW"/>
</dbReference>
<dbReference type="CDD" id="cd08071">
    <property type="entry name" value="MPN_DUF2466"/>
    <property type="match status" value="1"/>
</dbReference>
<dbReference type="Gene3D" id="3.40.140.10">
    <property type="entry name" value="Cytidine Deaminase, domain 2"/>
    <property type="match status" value="1"/>
</dbReference>
<dbReference type="InterPro" id="IPR037518">
    <property type="entry name" value="MPN"/>
</dbReference>
<dbReference type="InterPro" id="IPR025657">
    <property type="entry name" value="RadC_JAB"/>
</dbReference>
<dbReference type="InterPro" id="IPR010994">
    <property type="entry name" value="RuvA_2-like"/>
</dbReference>
<dbReference type="InterPro" id="IPR001405">
    <property type="entry name" value="UPF0758"/>
</dbReference>
<dbReference type="InterPro" id="IPR020891">
    <property type="entry name" value="UPF0758_CS"/>
</dbReference>
<dbReference type="InterPro" id="IPR046778">
    <property type="entry name" value="UPF0758_N"/>
</dbReference>
<dbReference type="NCBIfam" id="NF000642">
    <property type="entry name" value="PRK00024.1"/>
    <property type="match status" value="1"/>
</dbReference>
<dbReference type="NCBIfam" id="TIGR00608">
    <property type="entry name" value="radc"/>
    <property type="match status" value="1"/>
</dbReference>
<dbReference type="PANTHER" id="PTHR30471">
    <property type="entry name" value="DNA REPAIR PROTEIN RADC"/>
    <property type="match status" value="1"/>
</dbReference>
<dbReference type="PANTHER" id="PTHR30471:SF3">
    <property type="entry name" value="UPF0758 PROTEIN YEES-RELATED"/>
    <property type="match status" value="1"/>
</dbReference>
<dbReference type="Pfam" id="PF04002">
    <property type="entry name" value="RadC"/>
    <property type="match status" value="1"/>
</dbReference>
<dbReference type="Pfam" id="PF20582">
    <property type="entry name" value="UPF0758_N"/>
    <property type="match status" value="1"/>
</dbReference>
<dbReference type="SUPFAM" id="SSF47781">
    <property type="entry name" value="RuvA domain 2-like"/>
    <property type="match status" value="1"/>
</dbReference>
<dbReference type="PROSITE" id="PS50249">
    <property type="entry name" value="MPN"/>
    <property type="match status" value="1"/>
</dbReference>
<dbReference type="PROSITE" id="PS01302">
    <property type="entry name" value="UPF0758"/>
    <property type="match status" value="1"/>
</dbReference>
<name>Y1079_STRP8</name>
<organism>
    <name type="scientific">Streptococcus pyogenes serotype M18 (strain MGAS8232)</name>
    <dbReference type="NCBI Taxonomy" id="186103"/>
    <lineage>
        <taxon>Bacteria</taxon>
        <taxon>Bacillati</taxon>
        <taxon>Bacillota</taxon>
        <taxon>Bacilli</taxon>
        <taxon>Lactobacillales</taxon>
        <taxon>Streptococcaceae</taxon>
        <taxon>Streptococcus</taxon>
    </lineage>
</organism>
<feature type="chain" id="PRO_0000190742" description="UPF0758 protein spyM18_1079">
    <location>
        <begin position="1"/>
        <end position="226"/>
    </location>
</feature>
<feature type="domain" description="MPN" evidence="1">
    <location>
        <begin position="103"/>
        <end position="225"/>
    </location>
</feature>
<feature type="short sequence motif" description="JAMM motif" evidence="1">
    <location>
        <begin position="174"/>
        <end position="187"/>
    </location>
</feature>
<feature type="binding site" evidence="1">
    <location>
        <position position="174"/>
    </location>
    <ligand>
        <name>Zn(2+)</name>
        <dbReference type="ChEBI" id="CHEBI:29105"/>
        <note>catalytic</note>
    </ligand>
</feature>
<feature type="binding site" evidence="1">
    <location>
        <position position="176"/>
    </location>
    <ligand>
        <name>Zn(2+)</name>
        <dbReference type="ChEBI" id="CHEBI:29105"/>
        <note>catalytic</note>
    </ligand>
</feature>
<feature type="binding site" evidence="1">
    <location>
        <position position="187"/>
    </location>
    <ligand>
        <name>Zn(2+)</name>
        <dbReference type="ChEBI" id="CHEBI:29105"/>
        <note>catalytic</note>
    </ligand>
</feature>
<proteinExistence type="inferred from homology"/>
<accession>P65963</accession>
<accession>Q99ZR5</accession>